<organism>
    <name type="scientific">Bradyrhizobium sp. (strain BTAi1 / ATCC BAA-1182)</name>
    <dbReference type="NCBI Taxonomy" id="288000"/>
    <lineage>
        <taxon>Bacteria</taxon>
        <taxon>Pseudomonadati</taxon>
        <taxon>Pseudomonadota</taxon>
        <taxon>Alphaproteobacteria</taxon>
        <taxon>Hyphomicrobiales</taxon>
        <taxon>Nitrobacteraceae</taxon>
        <taxon>Bradyrhizobium</taxon>
    </lineage>
</organism>
<sequence length="216" mass="22941">MSARQPAIADTALVTAIDAVIEAGRRSAERGWVPATSGNFSVRVDAERIAVTRSGVDKGRLTPNDVLCQQLSQPLVAGSSAEAELHRRLYADDAEIGAVFHTHAVSATVLAQLHRGERLLTLSGWELQKALAGIRSHETVVEVPVVANDQDVVALANEVAARLAAPVAAGAVRAPGYLIAGHGLYAWGHTAVDAFRHLEALDVLFTQILTLRRHAS</sequence>
<comment type="function">
    <text evidence="1">Catalyzes the dehydration of methylthioribulose-1-phosphate (MTRu-1-P) into 2,3-diketo-5-methylthiopentyl-1-phosphate (DK-MTP-1-P).</text>
</comment>
<comment type="catalytic activity">
    <reaction evidence="1">
        <text>5-(methylsulfanyl)-D-ribulose 1-phosphate = 5-methylsulfanyl-2,3-dioxopentyl phosphate + H2O</text>
        <dbReference type="Rhea" id="RHEA:15549"/>
        <dbReference type="ChEBI" id="CHEBI:15377"/>
        <dbReference type="ChEBI" id="CHEBI:58548"/>
        <dbReference type="ChEBI" id="CHEBI:58828"/>
        <dbReference type="EC" id="4.2.1.109"/>
    </reaction>
</comment>
<comment type="cofactor">
    <cofactor evidence="1">
        <name>Zn(2+)</name>
        <dbReference type="ChEBI" id="CHEBI:29105"/>
    </cofactor>
    <text evidence="1">Binds 1 zinc ion per subunit.</text>
</comment>
<comment type="pathway">
    <text evidence="1">Amino-acid biosynthesis; L-methionine biosynthesis via salvage pathway; L-methionine from S-methyl-5-thio-alpha-D-ribose 1-phosphate: step 2/6.</text>
</comment>
<comment type="similarity">
    <text evidence="1">Belongs to the aldolase class II family. MtnB subfamily.</text>
</comment>
<gene>
    <name evidence="1" type="primary">mtnB</name>
    <name type="ordered locus">BBta_2510</name>
</gene>
<feature type="chain" id="PRO_0000357072" description="Methylthioribulose-1-phosphate dehydratase">
    <location>
        <begin position="1"/>
        <end position="216"/>
    </location>
</feature>
<feature type="binding site" evidence="1">
    <location>
        <position position="101"/>
    </location>
    <ligand>
        <name>Zn(2+)</name>
        <dbReference type="ChEBI" id="CHEBI:29105"/>
    </ligand>
</feature>
<feature type="binding site" evidence="1">
    <location>
        <position position="103"/>
    </location>
    <ligand>
        <name>Zn(2+)</name>
        <dbReference type="ChEBI" id="CHEBI:29105"/>
    </ligand>
</feature>
<keyword id="KW-0028">Amino-acid biosynthesis</keyword>
<keyword id="KW-0456">Lyase</keyword>
<keyword id="KW-0479">Metal-binding</keyword>
<keyword id="KW-0486">Methionine biosynthesis</keyword>
<keyword id="KW-1185">Reference proteome</keyword>
<keyword id="KW-0862">Zinc</keyword>
<name>MTNB_BRASB</name>
<evidence type="ECO:0000255" key="1">
    <source>
        <dbReference type="HAMAP-Rule" id="MF_01677"/>
    </source>
</evidence>
<accession>A5EES6</accession>
<protein>
    <recommendedName>
        <fullName evidence="1">Methylthioribulose-1-phosphate dehydratase</fullName>
        <shortName evidence="1">MTRu-1-P dehydratase</shortName>
        <ecNumber evidence="1">4.2.1.109</ecNumber>
    </recommendedName>
</protein>
<reference key="1">
    <citation type="journal article" date="2007" name="Science">
        <title>Legumes symbioses: absence of nod genes in photosynthetic bradyrhizobia.</title>
        <authorList>
            <person name="Giraud E."/>
            <person name="Moulin L."/>
            <person name="Vallenet D."/>
            <person name="Barbe V."/>
            <person name="Cytryn E."/>
            <person name="Avarre J.-C."/>
            <person name="Jaubert M."/>
            <person name="Simon D."/>
            <person name="Cartieaux F."/>
            <person name="Prin Y."/>
            <person name="Bena G."/>
            <person name="Hannibal L."/>
            <person name="Fardoux J."/>
            <person name="Kojadinovic M."/>
            <person name="Vuillet L."/>
            <person name="Lajus A."/>
            <person name="Cruveiller S."/>
            <person name="Rouy Z."/>
            <person name="Mangenot S."/>
            <person name="Segurens B."/>
            <person name="Dossat C."/>
            <person name="Franck W.L."/>
            <person name="Chang W.-S."/>
            <person name="Saunders E."/>
            <person name="Bruce D."/>
            <person name="Richardson P."/>
            <person name="Normand P."/>
            <person name="Dreyfus B."/>
            <person name="Pignol D."/>
            <person name="Stacey G."/>
            <person name="Emerich D."/>
            <person name="Vermeglio A."/>
            <person name="Medigue C."/>
            <person name="Sadowsky M."/>
        </authorList>
    </citation>
    <scope>NUCLEOTIDE SEQUENCE [LARGE SCALE GENOMIC DNA]</scope>
    <source>
        <strain>BTAi1 / ATCC BAA-1182</strain>
    </source>
</reference>
<proteinExistence type="inferred from homology"/>
<dbReference type="EC" id="4.2.1.109" evidence="1"/>
<dbReference type="EMBL" id="CP000494">
    <property type="protein sequence ID" value="ABQ34670.1"/>
    <property type="molecule type" value="Genomic_DNA"/>
</dbReference>
<dbReference type="RefSeq" id="WP_012042698.1">
    <property type="nucleotide sequence ID" value="NC_009485.1"/>
</dbReference>
<dbReference type="SMR" id="A5EES6"/>
<dbReference type="STRING" id="288000.BBta_2510"/>
<dbReference type="KEGG" id="bbt:BBta_2510"/>
<dbReference type="eggNOG" id="COG0235">
    <property type="taxonomic scope" value="Bacteria"/>
</dbReference>
<dbReference type="HOGENOM" id="CLU_006033_4_1_5"/>
<dbReference type="OrthoDB" id="5291399at2"/>
<dbReference type="UniPathway" id="UPA00904">
    <property type="reaction ID" value="UER00875"/>
</dbReference>
<dbReference type="Proteomes" id="UP000000246">
    <property type="component" value="Chromosome"/>
</dbReference>
<dbReference type="GO" id="GO:0005829">
    <property type="term" value="C:cytosol"/>
    <property type="evidence" value="ECO:0007669"/>
    <property type="project" value="TreeGrafter"/>
</dbReference>
<dbReference type="GO" id="GO:0016832">
    <property type="term" value="F:aldehyde-lyase activity"/>
    <property type="evidence" value="ECO:0007669"/>
    <property type="project" value="TreeGrafter"/>
</dbReference>
<dbReference type="GO" id="GO:0046570">
    <property type="term" value="F:methylthioribulose 1-phosphate dehydratase activity"/>
    <property type="evidence" value="ECO:0007669"/>
    <property type="project" value="UniProtKB-UniRule"/>
</dbReference>
<dbReference type="GO" id="GO:0008270">
    <property type="term" value="F:zinc ion binding"/>
    <property type="evidence" value="ECO:0007669"/>
    <property type="project" value="UniProtKB-UniRule"/>
</dbReference>
<dbReference type="GO" id="GO:0019509">
    <property type="term" value="P:L-methionine salvage from methylthioadenosine"/>
    <property type="evidence" value="ECO:0007669"/>
    <property type="project" value="UniProtKB-UniRule"/>
</dbReference>
<dbReference type="GO" id="GO:0019323">
    <property type="term" value="P:pentose catabolic process"/>
    <property type="evidence" value="ECO:0007669"/>
    <property type="project" value="TreeGrafter"/>
</dbReference>
<dbReference type="Gene3D" id="3.40.225.10">
    <property type="entry name" value="Class II aldolase/adducin N-terminal domain"/>
    <property type="match status" value="1"/>
</dbReference>
<dbReference type="HAMAP" id="MF_01677">
    <property type="entry name" value="Salvage_MtnB"/>
    <property type="match status" value="1"/>
</dbReference>
<dbReference type="InterPro" id="IPR050197">
    <property type="entry name" value="Aldolase_class_II_sugar_metab"/>
</dbReference>
<dbReference type="InterPro" id="IPR001303">
    <property type="entry name" value="Aldolase_II/adducin_N"/>
</dbReference>
<dbReference type="InterPro" id="IPR036409">
    <property type="entry name" value="Aldolase_II/adducin_N_sf"/>
</dbReference>
<dbReference type="InterPro" id="IPR017714">
    <property type="entry name" value="MethylthioRu-1-P_deHdtase_MtnB"/>
</dbReference>
<dbReference type="NCBIfam" id="TIGR03328">
    <property type="entry name" value="salvage_mtnB"/>
    <property type="match status" value="1"/>
</dbReference>
<dbReference type="PANTHER" id="PTHR22789">
    <property type="entry name" value="FUCULOSE PHOSPHATE ALDOLASE"/>
    <property type="match status" value="1"/>
</dbReference>
<dbReference type="PANTHER" id="PTHR22789:SF8">
    <property type="entry name" value="L-RIBULOSE-5-PHOSPHATE 4-EPIMERASE SGBE"/>
    <property type="match status" value="1"/>
</dbReference>
<dbReference type="Pfam" id="PF00596">
    <property type="entry name" value="Aldolase_II"/>
    <property type="match status" value="1"/>
</dbReference>
<dbReference type="SMART" id="SM01007">
    <property type="entry name" value="Aldolase_II"/>
    <property type="match status" value="1"/>
</dbReference>
<dbReference type="SUPFAM" id="SSF53639">
    <property type="entry name" value="AraD/HMP-PK domain-like"/>
    <property type="match status" value="1"/>
</dbReference>